<sequence>MAPSKWDDEEESVSPPPVVARRKFDDEEEEDVLDSWDAAEDSEVEREKAAKAAEAKAKAEAEAAANKKSKAQRIQEKKAQRKADADAEDSDDSDEDEAERRARLRKTEKDADLKHAEDLFGDIDLNRMRNRSAPKAVVISDGTDPTQAVDLSAMPLFKPATKDQFTRVTTTLIPLLTTQSKKPQYALWAQDFIKQLVKDLPSGDVKKIASSLTTLSNEKMKEERAADKGNKKTKAAKTKVSLVTSRENKIETNSYDDDGLDDDDFM</sequence>
<protein>
    <recommendedName>
        <fullName evidence="1">Eukaryotic translation initiation factor 3 subunit J</fullName>
        <shortName evidence="1">eIF3j</shortName>
    </recommendedName>
    <alternativeName>
        <fullName>Eukaryotic translation initiation factor 3 30 kDa subunit</fullName>
        <shortName>eIF-3 30 kDa</shortName>
    </alternativeName>
</protein>
<organism>
    <name type="scientific">Aspergillus niger (strain ATCC MYA-4892 / CBS 513.88 / FGSC A1513)</name>
    <dbReference type="NCBI Taxonomy" id="425011"/>
    <lineage>
        <taxon>Eukaryota</taxon>
        <taxon>Fungi</taxon>
        <taxon>Dikarya</taxon>
        <taxon>Ascomycota</taxon>
        <taxon>Pezizomycotina</taxon>
        <taxon>Eurotiomycetes</taxon>
        <taxon>Eurotiomycetidae</taxon>
        <taxon>Eurotiales</taxon>
        <taxon>Aspergillaceae</taxon>
        <taxon>Aspergillus</taxon>
        <taxon>Aspergillus subgen. Circumdati</taxon>
    </lineage>
</organism>
<dbReference type="EMBL" id="AM270411">
    <property type="protein sequence ID" value="CAK43351.1"/>
    <property type="molecule type" value="Genomic_DNA"/>
</dbReference>
<dbReference type="RefSeq" id="XP_001399079.1">
    <property type="nucleotide sequence ID" value="XM_001399042.2"/>
</dbReference>
<dbReference type="SMR" id="A2RBC7"/>
<dbReference type="EnsemblFungi" id="CAK43351">
    <property type="protein sequence ID" value="CAK43351"/>
    <property type="gene ID" value="An18g06260"/>
</dbReference>
<dbReference type="GeneID" id="4990194"/>
<dbReference type="KEGG" id="ang:An18g06260"/>
<dbReference type="VEuPathDB" id="FungiDB:An18g06260"/>
<dbReference type="HOGENOM" id="CLU_087988_0_0_1"/>
<dbReference type="Proteomes" id="UP000006706">
    <property type="component" value="Chromosome 8L"/>
</dbReference>
<dbReference type="GO" id="GO:0016282">
    <property type="term" value="C:eukaryotic 43S preinitiation complex"/>
    <property type="evidence" value="ECO:0007669"/>
    <property type="project" value="UniProtKB-UniRule"/>
</dbReference>
<dbReference type="GO" id="GO:0033290">
    <property type="term" value="C:eukaryotic 48S preinitiation complex"/>
    <property type="evidence" value="ECO:0007669"/>
    <property type="project" value="UniProtKB-UniRule"/>
</dbReference>
<dbReference type="GO" id="GO:0005852">
    <property type="term" value="C:eukaryotic translation initiation factor 3 complex"/>
    <property type="evidence" value="ECO:0007669"/>
    <property type="project" value="UniProtKB-UniRule"/>
</dbReference>
<dbReference type="GO" id="GO:0003743">
    <property type="term" value="F:translation initiation factor activity"/>
    <property type="evidence" value="ECO:0007669"/>
    <property type="project" value="UniProtKB-UniRule"/>
</dbReference>
<dbReference type="GO" id="GO:0001732">
    <property type="term" value="P:formation of cytoplasmic translation initiation complex"/>
    <property type="evidence" value="ECO:0007669"/>
    <property type="project" value="UniProtKB-UniRule"/>
</dbReference>
<dbReference type="FunFam" id="1.10.246.60:FF:000003">
    <property type="entry name" value="Eukaryotic translation initiation factor 3 subunit J"/>
    <property type="match status" value="1"/>
</dbReference>
<dbReference type="Gene3D" id="1.10.246.60">
    <property type="entry name" value="Eukaryotic translation initiation factor 3 like domains"/>
    <property type="match status" value="1"/>
</dbReference>
<dbReference type="HAMAP" id="MF_03009">
    <property type="entry name" value="eIF3j"/>
    <property type="match status" value="1"/>
</dbReference>
<dbReference type="InterPro" id="IPR023194">
    <property type="entry name" value="eIF3-like_dom_sf"/>
</dbReference>
<dbReference type="InterPro" id="IPR013906">
    <property type="entry name" value="eIF3j"/>
</dbReference>
<dbReference type="PANTHER" id="PTHR21681">
    <property type="entry name" value="EUKARYOTIC TRANSLATION INITIATION FACTOR 3 SUBUNIT J"/>
    <property type="match status" value="1"/>
</dbReference>
<dbReference type="PANTHER" id="PTHR21681:SF0">
    <property type="entry name" value="EUKARYOTIC TRANSLATION INITIATION FACTOR 3 SUBUNIT J"/>
    <property type="match status" value="1"/>
</dbReference>
<dbReference type="Pfam" id="PF08597">
    <property type="entry name" value="eIF3_subunit"/>
    <property type="match status" value="1"/>
</dbReference>
<comment type="function">
    <text evidence="1">Component of the eukaryotic translation initiation factor 3 (eIF-3) complex, which is involved in protein synthesis of a specialized repertoire of mRNAs and, together with other initiation factors, stimulates binding of mRNA and methionyl-tRNAi to the 40S ribosome. The eIF-3 complex specifically targets and initiates translation of a subset of mRNAs involved in cell proliferation.</text>
</comment>
<comment type="subunit">
    <text evidence="1">Component of the eukaryotic translation initiation factor 3 (eIF-3) complex.</text>
</comment>
<comment type="subcellular location">
    <subcellularLocation>
        <location evidence="1">Cytoplasm</location>
    </subcellularLocation>
</comment>
<comment type="similarity">
    <text evidence="1">Belongs to the eIF-3 subunit J family.</text>
</comment>
<evidence type="ECO:0000255" key="1">
    <source>
        <dbReference type="HAMAP-Rule" id="MF_03009"/>
    </source>
</evidence>
<evidence type="ECO:0000256" key="2">
    <source>
        <dbReference type="SAM" id="MobiDB-lite"/>
    </source>
</evidence>
<accession>A2RBC7</accession>
<gene>
    <name type="primary">hcr1</name>
    <name type="ORF">An18g06260</name>
</gene>
<proteinExistence type="inferred from homology"/>
<feature type="chain" id="PRO_0000365148" description="Eukaryotic translation initiation factor 3 subunit J">
    <location>
        <begin position="1"/>
        <end position="266"/>
    </location>
</feature>
<feature type="region of interest" description="Disordered" evidence="2">
    <location>
        <begin position="1"/>
        <end position="111"/>
    </location>
</feature>
<feature type="region of interest" description="Disordered" evidence="2">
    <location>
        <begin position="217"/>
        <end position="266"/>
    </location>
</feature>
<feature type="coiled-coil region" evidence="1">
    <location>
        <begin position="40"/>
        <end position="82"/>
    </location>
</feature>
<feature type="compositionally biased region" description="Acidic residues" evidence="2">
    <location>
        <begin position="26"/>
        <end position="44"/>
    </location>
</feature>
<feature type="compositionally biased region" description="Basic and acidic residues" evidence="2">
    <location>
        <begin position="45"/>
        <end position="61"/>
    </location>
</feature>
<feature type="compositionally biased region" description="Basic and acidic residues" evidence="2">
    <location>
        <begin position="73"/>
        <end position="85"/>
    </location>
</feature>
<feature type="compositionally biased region" description="Acidic residues" evidence="2">
    <location>
        <begin position="86"/>
        <end position="97"/>
    </location>
</feature>
<feature type="compositionally biased region" description="Basic and acidic residues" evidence="2">
    <location>
        <begin position="98"/>
        <end position="111"/>
    </location>
</feature>
<feature type="compositionally biased region" description="Basic and acidic residues" evidence="2">
    <location>
        <begin position="218"/>
        <end position="230"/>
    </location>
</feature>
<feature type="compositionally biased region" description="Acidic residues" evidence="2">
    <location>
        <begin position="254"/>
        <end position="266"/>
    </location>
</feature>
<name>EIF3J_ASPNC</name>
<reference key="1">
    <citation type="journal article" date="2007" name="Nat. Biotechnol.">
        <title>Genome sequencing and analysis of the versatile cell factory Aspergillus niger CBS 513.88.</title>
        <authorList>
            <person name="Pel H.J."/>
            <person name="de Winde J.H."/>
            <person name="Archer D.B."/>
            <person name="Dyer P.S."/>
            <person name="Hofmann G."/>
            <person name="Schaap P.J."/>
            <person name="Turner G."/>
            <person name="de Vries R.P."/>
            <person name="Albang R."/>
            <person name="Albermann K."/>
            <person name="Andersen M.R."/>
            <person name="Bendtsen J.D."/>
            <person name="Benen J.A.E."/>
            <person name="van den Berg M."/>
            <person name="Breestraat S."/>
            <person name="Caddick M.X."/>
            <person name="Contreras R."/>
            <person name="Cornell M."/>
            <person name="Coutinho P.M."/>
            <person name="Danchin E.G.J."/>
            <person name="Debets A.J.M."/>
            <person name="Dekker P."/>
            <person name="van Dijck P.W.M."/>
            <person name="van Dijk A."/>
            <person name="Dijkhuizen L."/>
            <person name="Driessen A.J.M."/>
            <person name="d'Enfert C."/>
            <person name="Geysens S."/>
            <person name="Goosen C."/>
            <person name="Groot G.S.P."/>
            <person name="de Groot P.W.J."/>
            <person name="Guillemette T."/>
            <person name="Henrissat B."/>
            <person name="Herweijer M."/>
            <person name="van den Hombergh J.P.T.W."/>
            <person name="van den Hondel C.A.M.J.J."/>
            <person name="van der Heijden R.T.J.M."/>
            <person name="van der Kaaij R.M."/>
            <person name="Klis F.M."/>
            <person name="Kools H.J."/>
            <person name="Kubicek C.P."/>
            <person name="van Kuyk P.A."/>
            <person name="Lauber J."/>
            <person name="Lu X."/>
            <person name="van der Maarel M.J.E.C."/>
            <person name="Meulenberg R."/>
            <person name="Menke H."/>
            <person name="Mortimer M.A."/>
            <person name="Nielsen J."/>
            <person name="Oliver S.G."/>
            <person name="Olsthoorn M."/>
            <person name="Pal K."/>
            <person name="van Peij N.N.M.E."/>
            <person name="Ram A.F.J."/>
            <person name="Rinas U."/>
            <person name="Roubos J.A."/>
            <person name="Sagt C.M.J."/>
            <person name="Schmoll M."/>
            <person name="Sun J."/>
            <person name="Ussery D."/>
            <person name="Varga J."/>
            <person name="Vervecken W."/>
            <person name="van de Vondervoort P.J.J."/>
            <person name="Wedler H."/>
            <person name="Woesten H.A.B."/>
            <person name="Zeng A.-P."/>
            <person name="van Ooyen A.J.J."/>
            <person name="Visser J."/>
            <person name="Stam H."/>
        </authorList>
    </citation>
    <scope>NUCLEOTIDE SEQUENCE [LARGE SCALE GENOMIC DNA]</scope>
    <source>
        <strain>ATCC MYA-4892 / CBS 513.88 / FGSC A1513</strain>
    </source>
</reference>
<keyword id="KW-0175">Coiled coil</keyword>
<keyword id="KW-0963">Cytoplasm</keyword>
<keyword id="KW-0396">Initiation factor</keyword>
<keyword id="KW-0648">Protein biosynthesis</keyword>
<keyword id="KW-1185">Reference proteome</keyword>